<name>IF4A2_PONAB</name>
<dbReference type="EC" id="3.6.4.13"/>
<dbReference type="EMBL" id="CR861119">
    <property type="protein sequence ID" value="CAH93195.1"/>
    <property type="molecule type" value="mRNA"/>
</dbReference>
<dbReference type="RefSeq" id="NP_001126879.1">
    <property type="nucleotide sequence ID" value="NM_001133407.2"/>
</dbReference>
<dbReference type="RefSeq" id="XP_009237907.1">
    <property type="nucleotide sequence ID" value="XM_009239632.1"/>
</dbReference>
<dbReference type="SMR" id="Q5R4X1"/>
<dbReference type="FunCoup" id="Q5R4X1">
    <property type="interactions" value="2679"/>
</dbReference>
<dbReference type="STRING" id="9601.ENSPPYP00000016089"/>
<dbReference type="GeneID" id="100189659"/>
<dbReference type="CTD" id="1974"/>
<dbReference type="eggNOG" id="KOG0327">
    <property type="taxonomic scope" value="Eukaryota"/>
</dbReference>
<dbReference type="HOGENOM" id="CLU_003041_1_0_1"/>
<dbReference type="InParanoid" id="Q5R4X1"/>
<dbReference type="OrthoDB" id="10265785at2759"/>
<dbReference type="TreeFam" id="TF101524"/>
<dbReference type="Proteomes" id="UP000001595">
    <property type="component" value="Chromosome 3"/>
</dbReference>
<dbReference type="GO" id="GO:0005524">
    <property type="term" value="F:ATP binding"/>
    <property type="evidence" value="ECO:0007669"/>
    <property type="project" value="UniProtKB-KW"/>
</dbReference>
<dbReference type="GO" id="GO:0016887">
    <property type="term" value="F:ATP hydrolysis activity"/>
    <property type="evidence" value="ECO:0007669"/>
    <property type="project" value="RHEA"/>
</dbReference>
<dbReference type="GO" id="GO:0003723">
    <property type="term" value="F:RNA binding"/>
    <property type="evidence" value="ECO:0007669"/>
    <property type="project" value="UniProtKB-KW"/>
</dbReference>
<dbReference type="GO" id="GO:0003724">
    <property type="term" value="F:RNA helicase activity"/>
    <property type="evidence" value="ECO:0007669"/>
    <property type="project" value="UniProtKB-EC"/>
</dbReference>
<dbReference type="GO" id="GO:0003743">
    <property type="term" value="F:translation initiation factor activity"/>
    <property type="evidence" value="ECO:0007669"/>
    <property type="project" value="UniProtKB-KW"/>
</dbReference>
<dbReference type="CDD" id="cd18046">
    <property type="entry name" value="DEADc_EIF4AII_EIF4AI_DDX2"/>
    <property type="match status" value="1"/>
</dbReference>
<dbReference type="CDD" id="cd18787">
    <property type="entry name" value="SF2_C_DEAD"/>
    <property type="match status" value="1"/>
</dbReference>
<dbReference type="FunFam" id="3.40.50.300:FF:000089">
    <property type="entry name" value="Eukaryotic initiation factor 4A-II"/>
    <property type="match status" value="1"/>
</dbReference>
<dbReference type="FunFam" id="3.40.50.300:FF:000031">
    <property type="entry name" value="Eukaryotic initiation factor 4A-III"/>
    <property type="match status" value="1"/>
</dbReference>
<dbReference type="Gene3D" id="3.40.50.300">
    <property type="entry name" value="P-loop containing nucleotide triphosphate hydrolases"/>
    <property type="match status" value="2"/>
</dbReference>
<dbReference type="InterPro" id="IPR011545">
    <property type="entry name" value="DEAD/DEAH_box_helicase_dom"/>
</dbReference>
<dbReference type="InterPro" id="IPR044728">
    <property type="entry name" value="EIF4A_DEADc"/>
</dbReference>
<dbReference type="InterPro" id="IPR014001">
    <property type="entry name" value="Helicase_ATP-bd"/>
</dbReference>
<dbReference type="InterPro" id="IPR001650">
    <property type="entry name" value="Helicase_C-like"/>
</dbReference>
<dbReference type="InterPro" id="IPR027417">
    <property type="entry name" value="P-loop_NTPase"/>
</dbReference>
<dbReference type="InterPro" id="IPR000629">
    <property type="entry name" value="RNA-helicase_DEAD-box_CS"/>
</dbReference>
<dbReference type="InterPro" id="IPR014014">
    <property type="entry name" value="RNA_helicase_DEAD_Q_motif"/>
</dbReference>
<dbReference type="PANTHER" id="PTHR47958">
    <property type="entry name" value="ATP-DEPENDENT RNA HELICASE DBP3"/>
    <property type="match status" value="1"/>
</dbReference>
<dbReference type="Pfam" id="PF00270">
    <property type="entry name" value="DEAD"/>
    <property type="match status" value="1"/>
</dbReference>
<dbReference type="Pfam" id="PF00271">
    <property type="entry name" value="Helicase_C"/>
    <property type="match status" value="1"/>
</dbReference>
<dbReference type="SMART" id="SM00487">
    <property type="entry name" value="DEXDc"/>
    <property type="match status" value="1"/>
</dbReference>
<dbReference type="SMART" id="SM00490">
    <property type="entry name" value="HELICc"/>
    <property type="match status" value="1"/>
</dbReference>
<dbReference type="SUPFAM" id="SSF52540">
    <property type="entry name" value="P-loop containing nucleoside triphosphate hydrolases"/>
    <property type="match status" value="1"/>
</dbReference>
<dbReference type="PROSITE" id="PS00039">
    <property type="entry name" value="DEAD_ATP_HELICASE"/>
    <property type="match status" value="1"/>
</dbReference>
<dbReference type="PROSITE" id="PS51192">
    <property type="entry name" value="HELICASE_ATP_BIND_1"/>
    <property type="match status" value="1"/>
</dbReference>
<dbReference type="PROSITE" id="PS51194">
    <property type="entry name" value="HELICASE_CTER"/>
    <property type="match status" value="1"/>
</dbReference>
<dbReference type="PROSITE" id="PS51195">
    <property type="entry name" value="Q_MOTIF"/>
    <property type="match status" value="1"/>
</dbReference>
<gene>
    <name type="primary">EIF4A2</name>
</gene>
<accession>Q5R4X1</accession>
<feature type="chain" id="PRO_0000054941" description="Eukaryotic initiation factor 4A-II">
    <location>
        <begin position="1"/>
        <end position="407"/>
    </location>
</feature>
<feature type="domain" description="Helicase ATP-binding" evidence="3">
    <location>
        <begin position="64"/>
        <end position="235"/>
    </location>
</feature>
<feature type="domain" description="Helicase C-terminal" evidence="4">
    <location>
        <begin position="246"/>
        <end position="407"/>
    </location>
</feature>
<feature type="region of interest" description="Disordered" evidence="5">
    <location>
        <begin position="1"/>
        <end position="22"/>
    </location>
</feature>
<feature type="short sequence motif" description="Q motif">
    <location>
        <begin position="33"/>
        <end position="61"/>
    </location>
</feature>
<feature type="short sequence motif" description="DEAD box">
    <location>
        <begin position="183"/>
        <end position="186"/>
    </location>
</feature>
<feature type="binding site" evidence="3">
    <location>
        <begin position="77"/>
        <end position="84"/>
    </location>
    <ligand>
        <name>ATP</name>
        <dbReference type="ChEBI" id="CHEBI:30616"/>
    </ligand>
</feature>
<feature type="modified residue" description="Phosphothreonine" evidence="2">
    <location>
        <position position="159"/>
    </location>
</feature>
<organism>
    <name type="scientific">Pongo abelii</name>
    <name type="common">Sumatran orangutan</name>
    <name type="synonym">Pongo pygmaeus abelii</name>
    <dbReference type="NCBI Taxonomy" id="9601"/>
    <lineage>
        <taxon>Eukaryota</taxon>
        <taxon>Metazoa</taxon>
        <taxon>Chordata</taxon>
        <taxon>Craniata</taxon>
        <taxon>Vertebrata</taxon>
        <taxon>Euteleostomi</taxon>
        <taxon>Mammalia</taxon>
        <taxon>Eutheria</taxon>
        <taxon>Euarchontoglires</taxon>
        <taxon>Primates</taxon>
        <taxon>Haplorrhini</taxon>
        <taxon>Catarrhini</taxon>
        <taxon>Hominidae</taxon>
        <taxon>Pongo</taxon>
    </lineage>
</organism>
<keyword id="KW-0067">ATP-binding</keyword>
<keyword id="KW-0347">Helicase</keyword>
<keyword id="KW-0378">Hydrolase</keyword>
<keyword id="KW-0396">Initiation factor</keyword>
<keyword id="KW-0547">Nucleotide-binding</keyword>
<keyword id="KW-0597">Phosphoprotein</keyword>
<keyword id="KW-0648">Protein biosynthesis</keyword>
<keyword id="KW-1185">Reference proteome</keyword>
<keyword id="KW-0694">RNA-binding</keyword>
<sequence>MSGGSADYNREHGGPEGMDPDGVIESNWNEIVDNFDDMNLKESLLRGIYAYGFEKPSAIQQRAIIPCIKGYDVIAQAQSGTGKTATFAISILQQLEIEFKETQALVLAPTRELAQQIQKVILALGDYMGATCHACIGGTNVRNEMQKLQAEAPHIVVGTPGRVFDMLNRRYLSPKWIKMFVLDEADEMLSRGFKDQIYEIFQKLNTSIQVVLLSATMPTDVLEVTKKFMRDPIRILVKKEELTLEGIKQFYINVEREEWKLDTLCDLYETLTITQAVIFLNTRRKVDWLTEKMHARDFTVSALHGDMDQKERDVIMREFRSGSSRVLITTDLLARGIDVQQVSLVINYDLPTNRENYIHRIGRGGRFGRKGVAINFVTEEDKRILRDIETFYNTTVEEMPMNVADLI</sequence>
<proteinExistence type="evidence at transcript level"/>
<comment type="function">
    <text evidence="1">ATP-dependent RNA helicase which is a subunit of the eIF4F complex involved in cap recognition and is required for mRNA binding to ribosome. In the current model of translation initiation, eIF4A unwinds RNA secondary structures in the 5'-UTR of mRNAs which is necessary to allow efficient binding of the small ribosomal subunit, and subsequent scanning for the initiator codon (By similarity).</text>
</comment>
<comment type="catalytic activity">
    <reaction>
        <text>ATP + H2O = ADP + phosphate + H(+)</text>
        <dbReference type="Rhea" id="RHEA:13065"/>
        <dbReference type="ChEBI" id="CHEBI:15377"/>
        <dbReference type="ChEBI" id="CHEBI:15378"/>
        <dbReference type="ChEBI" id="CHEBI:30616"/>
        <dbReference type="ChEBI" id="CHEBI:43474"/>
        <dbReference type="ChEBI" id="CHEBI:456216"/>
        <dbReference type="EC" id="3.6.4.13"/>
    </reaction>
</comment>
<comment type="subunit">
    <text evidence="1">eIF4F is a multi-subunit complex, the composition of which varies with external and internal environmental conditions. It is composed of at least EIF4A, EIF4E and EIF4G1/EIFFG3 (By similarity). Interacts with EIF4E. May interact with NOM1 (By similarity).</text>
</comment>
<comment type="similarity">
    <text evidence="6">Belongs to the DEAD box helicase family. eIF4A subfamily.</text>
</comment>
<reference key="1">
    <citation type="submission" date="2004-11" db="EMBL/GenBank/DDBJ databases">
        <authorList>
            <consortium name="The German cDNA consortium"/>
        </authorList>
    </citation>
    <scope>NUCLEOTIDE SEQUENCE [LARGE SCALE MRNA]</scope>
    <source>
        <tissue>Brain cortex</tissue>
    </source>
</reference>
<evidence type="ECO:0000250" key="1"/>
<evidence type="ECO:0000250" key="2">
    <source>
        <dbReference type="UniProtKB" id="Q14240"/>
    </source>
</evidence>
<evidence type="ECO:0000255" key="3">
    <source>
        <dbReference type="PROSITE-ProRule" id="PRU00541"/>
    </source>
</evidence>
<evidence type="ECO:0000255" key="4">
    <source>
        <dbReference type="PROSITE-ProRule" id="PRU00542"/>
    </source>
</evidence>
<evidence type="ECO:0000256" key="5">
    <source>
        <dbReference type="SAM" id="MobiDB-lite"/>
    </source>
</evidence>
<evidence type="ECO:0000305" key="6"/>
<protein>
    <recommendedName>
        <fullName>Eukaryotic initiation factor 4A-II</fullName>
        <shortName>eIF-4A-II</shortName>
        <shortName>eIF4A-II</shortName>
        <ecNumber>3.6.4.13</ecNumber>
    </recommendedName>
    <alternativeName>
        <fullName>ATP-dependent RNA helicase eIF4A-2</fullName>
    </alternativeName>
</protein>